<dbReference type="EC" id="5.5.1.29" evidence="2"/>
<dbReference type="EMBL" id="CP000875">
    <property type="protein sequence ID" value="ABX04785.1"/>
    <property type="molecule type" value="Genomic_DNA"/>
</dbReference>
<dbReference type="SMR" id="A9AWD5"/>
<dbReference type="STRING" id="316274.Haur_2145"/>
<dbReference type="KEGG" id="hau:Haur_2145"/>
<dbReference type="eggNOG" id="COG1657">
    <property type="taxonomic scope" value="Bacteria"/>
</dbReference>
<dbReference type="HOGENOM" id="CLU_041269_0_0_0"/>
<dbReference type="InParanoid" id="A9AWD5"/>
<dbReference type="BioCyc" id="HAUR316274:GHYA-2173-MONOMER"/>
<dbReference type="BRENDA" id="5.5.1.29">
    <property type="organism ID" value="2656"/>
</dbReference>
<dbReference type="Proteomes" id="UP000000787">
    <property type="component" value="Chromosome"/>
</dbReference>
<dbReference type="GO" id="GO:0106242">
    <property type="term" value="F:kolavenyl diphosphate synthase activity"/>
    <property type="evidence" value="ECO:0007669"/>
    <property type="project" value="UniProtKB-EC"/>
</dbReference>
<dbReference type="GO" id="GO:0000287">
    <property type="term" value="F:magnesium ion binding"/>
    <property type="evidence" value="ECO:0007669"/>
    <property type="project" value="TreeGrafter"/>
</dbReference>
<dbReference type="GO" id="GO:0010333">
    <property type="term" value="F:terpene synthase activity"/>
    <property type="evidence" value="ECO:0007669"/>
    <property type="project" value="InterPro"/>
</dbReference>
<dbReference type="GO" id="GO:0016102">
    <property type="term" value="P:diterpenoid biosynthetic process"/>
    <property type="evidence" value="ECO:0007669"/>
    <property type="project" value="TreeGrafter"/>
</dbReference>
<dbReference type="Gene3D" id="1.50.10.160">
    <property type="match status" value="1"/>
</dbReference>
<dbReference type="Gene3D" id="1.50.10.20">
    <property type="match status" value="1"/>
</dbReference>
<dbReference type="InterPro" id="IPR032696">
    <property type="entry name" value="SQ_cyclase_C"/>
</dbReference>
<dbReference type="InterPro" id="IPR050148">
    <property type="entry name" value="Terpene_synthase-like"/>
</dbReference>
<dbReference type="InterPro" id="IPR008930">
    <property type="entry name" value="Terpenoid_cyclase/PrenylTrfase"/>
</dbReference>
<dbReference type="PANTHER" id="PTHR31739:SF25">
    <property type="entry name" value="(E,E)-GERANYLLINALOOL SYNTHASE"/>
    <property type="match status" value="1"/>
</dbReference>
<dbReference type="PANTHER" id="PTHR31739">
    <property type="entry name" value="ENT-COPALYL DIPHOSPHATE SYNTHASE, CHLOROPLASTIC"/>
    <property type="match status" value="1"/>
</dbReference>
<dbReference type="Pfam" id="PF13243">
    <property type="entry name" value="SQHop_cyclase_C"/>
    <property type="match status" value="1"/>
</dbReference>
<dbReference type="SUPFAM" id="SSF48239">
    <property type="entry name" value="Terpenoid cyclases/Protein prenyltransferases"/>
    <property type="match status" value="2"/>
</dbReference>
<sequence>MSLIVDILIDDLRALIRDLGQNGGLMSPSVYDTSQALRLYPTPSEEHVWPAVNWLISQQQSDGGWGNPSMPLSRAVPTLAAILALRRHCQRRSTFDGLLEAKRFLRRQLEYWEKPLPDNLPVGMELLLPYMLEEAYREEHQDDIDDVPIKLRLNIPLAPYRELIALGEHKRSLIQQKKPRAGTAPVYSWEAWASHADPELIDGSGGIGHSPAATAAWLFAANHNPNLRNEIAGAENYLRQASLATSESAPCIMPTAWPIPRFEQSFSLYALVTGGILDFPSIQDVLKPQIADLHQALKPRGIGFSDDFMPDGDDTAAAVAVLIAAGYPVDLAILNQFEREPYFVAYHGELQPSISLTARAVHALDLAGVDISRWWKIFIDAQKLDGSWSGDKWNTSWLYTTCHVLIALKNSPYKTAMKEAVAALQVHQHPDGGWGIINRSTTVETAYAVLALQNLREAGLLDDDDIHMLQRGYNWLCIHYRPFRMKEYQCWLNKEIYCPQRIDRAYELSAMLAVTLGELKL</sequence>
<accession>A9AWD5</accession>
<reference key="1">
    <citation type="journal article" date="2011" name="Stand. Genomic Sci.">
        <title>Complete genome sequence of the filamentous gliding predatory bacterium Herpetosiphon aurantiacus type strain (114-95(T)).</title>
        <authorList>
            <person name="Kiss H."/>
            <person name="Nett M."/>
            <person name="Domin N."/>
            <person name="Martin K."/>
            <person name="Maresca J.A."/>
            <person name="Copeland A."/>
            <person name="Lapidus A."/>
            <person name="Lucas S."/>
            <person name="Berry K.W."/>
            <person name="Glavina Del Rio T."/>
            <person name="Dalin E."/>
            <person name="Tice H."/>
            <person name="Pitluck S."/>
            <person name="Richardson P."/>
            <person name="Bruce D."/>
            <person name="Goodwin L."/>
            <person name="Han C."/>
            <person name="Detter J.C."/>
            <person name="Schmutz J."/>
            <person name="Brettin T."/>
            <person name="Land M."/>
            <person name="Hauser L."/>
            <person name="Kyrpides N.C."/>
            <person name="Ivanova N."/>
            <person name="Goeker M."/>
            <person name="Woyke T."/>
            <person name="Klenk H.P."/>
            <person name="Bryant D.A."/>
        </authorList>
    </citation>
    <scope>NUCLEOTIDE SEQUENCE [LARGE SCALE GENOMIC DNA]</scope>
    <source>
        <strain evidence="7">ATCC 23779 / DSM 785 / 114-95</strain>
    </source>
</reference>
<reference key="2">
    <citation type="journal article" date="2015" name="ChemBioChem">
        <title>Identification of a new diterpene biosynthetic gene cluster that produces O-methylkolavelool in Herpetosiphon aurantiacus.</title>
        <authorList>
            <person name="Nakano C."/>
            <person name="Oshima M."/>
            <person name="Kurashima N."/>
            <person name="Hoshino T."/>
        </authorList>
    </citation>
    <scope>FUNCTION</scope>
    <scope>CATALYTIC ACTIVITY</scope>
    <scope>COFACTOR</scope>
    <scope>DOMAIN</scope>
    <source>
        <strain>ATCC 23779 / DSM 785 / 114-95</strain>
    </source>
</reference>
<protein>
    <recommendedName>
        <fullName evidence="3">(+)-kolavenyl diphosphate synthase</fullName>
        <ecNumber evidence="2">5.5.1.29</ecNumber>
    </recommendedName>
    <alternativeName>
        <fullName evidence="3">Class II cyclase</fullName>
    </alternativeName>
    <alternativeName>
        <fullName evidence="5">Diterpene cyclase</fullName>
    </alternativeName>
</protein>
<organism>
    <name type="scientific">Herpetosiphon aurantiacus (strain ATCC 23779 / DSM 785 / 114-95)</name>
    <dbReference type="NCBI Taxonomy" id="316274"/>
    <lineage>
        <taxon>Bacteria</taxon>
        <taxon>Bacillati</taxon>
        <taxon>Chloroflexota</taxon>
        <taxon>Chloroflexia</taxon>
        <taxon>Herpetosiphonales</taxon>
        <taxon>Herpetosiphonaceae</taxon>
        <taxon>Herpetosiphon</taxon>
    </lineage>
</organism>
<gene>
    <name evidence="6" type="ordered locus">Haur_2145</name>
</gene>
<feature type="chain" id="PRO_0000443953" description="(+)-kolavenyl diphosphate synthase">
    <location>
        <begin position="1"/>
        <end position="521"/>
    </location>
</feature>
<feature type="short sequence motif" description="DXDD motif" evidence="5">
    <location>
        <begin position="311"/>
        <end position="314"/>
    </location>
</feature>
<feature type="binding site" evidence="1">
    <location>
        <position position="311"/>
    </location>
    <ligand>
        <name>Mg(2+)</name>
        <dbReference type="ChEBI" id="CHEBI:18420"/>
    </ligand>
</feature>
<feature type="binding site" evidence="1">
    <location>
        <position position="313"/>
    </location>
    <ligand>
        <name>Mg(2+)</name>
        <dbReference type="ChEBI" id="CHEBI:18420"/>
    </ligand>
</feature>
<keyword id="KW-0413">Isomerase</keyword>
<keyword id="KW-0456">Lyase</keyword>
<keyword id="KW-0460">Magnesium</keyword>
<keyword id="KW-0479">Metal-binding</keyword>
<name>KVDS_HERA2</name>
<evidence type="ECO:0000250" key="1">
    <source>
        <dbReference type="UniProtKB" id="C7BKP9"/>
    </source>
</evidence>
<evidence type="ECO:0000269" key="2">
    <source>
    </source>
</evidence>
<evidence type="ECO:0000303" key="3">
    <source>
    </source>
</evidence>
<evidence type="ECO:0000305" key="4"/>
<evidence type="ECO:0000305" key="5">
    <source>
    </source>
</evidence>
<evidence type="ECO:0000312" key="6">
    <source>
        <dbReference type="EMBL" id="ABX04785.1"/>
    </source>
</evidence>
<evidence type="ECO:0000312" key="7">
    <source>
        <dbReference type="Proteomes" id="UP000000787"/>
    </source>
</evidence>
<proteinExistence type="evidence at protein level"/>
<comment type="function">
    <text evidence="2">Involved in the biosynthesis of (+)-O-methylkolavelool. Catalyzes the conversion of geranylgeranyl diphosphate into (+)-kolavenyl diphosphate.</text>
</comment>
<comment type="catalytic activity">
    <reaction evidence="2">
        <text>(2E,6E,10E)-geranylgeranyl diphosphate = (+)-kolavenyl diphosphate</text>
        <dbReference type="Rhea" id="RHEA:54676"/>
        <dbReference type="ChEBI" id="CHEBI:58756"/>
        <dbReference type="ChEBI" id="CHEBI:138311"/>
        <dbReference type="EC" id="5.5.1.29"/>
    </reaction>
</comment>
<comment type="cofactor">
    <cofactor evidence="5">
        <name>Mg(2+)</name>
        <dbReference type="ChEBI" id="CHEBI:18420"/>
    </cofactor>
</comment>
<comment type="domain">
    <text evidence="5">The Asp-Xaa-Asp-Asp (DXDD) motif is important for the catalytic activity, presumably through binding to Mg(2+).</text>
</comment>
<comment type="similarity">
    <text evidence="4">Belongs to the terpene synthase family.</text>
</comment>